<comment type="function">
    <text evidence="1">This protein binds to the 23S rRNA, and is important in its secondary structure. It is located near the subunit interface in the base of the L7/L12 stalk, and near the tRNA binding site of the peptidyltransferase center.</text>
</comment>
<comment type="subunit">
    <text evidence="1">Part of the 50S ribosomal subunit.</text>
</comment>
<comment type="similarity">
    <text evidence="1">Belongs to the universal ribosomal protein uL6 family.</text>
</comment>
<gene>
    <name evidence="1" type="primary">rplF</name>
    <name type="ordered locus">Spro_4529</name>
</gene>
<accession>A8GKI2</accession>
<sequence>MSRVAKAPVVIPAGVEVKLNGQVISIKGKNGELTRTVHNAVEVKQEANALTFAPREGFANAWAQAGTTRALLNAMVVGVTEGFTKKLQLVGVGYRAAVKGNVVNLALGFSHPVDHQLPAGITAECPSQTEIVLKGADKQVIGQVAADLRAYRRPEPYKGKGVRYADEVVRTKEAKKK</sequence>
<protein>
    <recommendedName>
        <fullName evidence="1">Large ribosomal subunit protein uL6</fullName>
    </recommendedName>
    <alternativeName>
        <fullName evidence="2">50S ribosomal protein L6</fullName>
    </alternativeName>
</protein>
<organism>
    <name type="scientific">Serratia proteamaculans (strain 568)</name>
    <dbReference type="NCBI Taxonomy" id="399741"/>
    <lineage>
        <taxon>Bacteria</taxon>
        <taxon>Pseudomonadati</taxon>
        <taxon>Pseudomonadota</taxon>
        <taxon>Gammaproteobacteria</taxon>
        <taxon>Enterobacterales</taxon>
        <taxon>Yersiniaceae</taxon>
        <taxon>Serratia</taxon>
    </lineage>
</organism>
<name>RL6_SERP5</name>
<proteinExistence type="inferred from homology"/>
<evidence type="ECO:0000255" key="1">
    <source>
        <dbReference type="HAMAP-Rule" id="MF_01365"/>
    </source>
</evidence>
<evidence type="ECO:0000305" key="2"/>
<keyword id="KW-0687">Ribonucleoprotein</keyword>
<keyword id="KW-0689">Ribosomal protein</keyword>
<keyword id="KW-0694">RNA-binding</keyword>
<keyword id="KW-0699">rRNA-binding</keyword>
<reference key="1">
    <citation type="submission" date="2007-09" db="EMBL/GenBank/DDBJ databases">
        <title>Complete sequence of chromosome of Serratia proteamaculans 568.</title>
        <authorList>
            <consortium name="US DOE Joint Genome Institute"/>
            <person name="Copeland A."/>
            <person name="Lucas S."/>
            <person name="Lapidus A."/>
            <person name="Barry K."/>
            <person name="Glavina del Rio T."/>
            <person name="Dalin E."/>
            <person name="Tice H."/>
            <person name="Pitluck S."/>
            <person name="Chain P."/>
            <person name="Malfatti S."/>
            <person name="Shin M."/>
            <person name="Vergez L."/>
            <person name="Schmutz J."/>
            <person name="Larimer F."/>
            <person name="Land M."/>
            <person name="Hauser L."/>
            <person name="Kyrpides N."/>
            <person name="Kim E."/>
            <person name="Taghavi S."/>
            <person name="Newman L."/>
            <person name="Vangronsveld J."/>
            <person name="van der Lelie D."/>
            <person name="Richardson P."/>
        </authorList>
    </citation>
    <scope>NUCLEOTIDE SEQUENCE [LARGE SCALE GENOMIC DNA]</scope>
    <source>
        <strain>568</strain>
    </source>
</reference>
<dbReference type="EMBL" id="CP000826">
    <property type="protein sequence ID" value="ABV43622.1"/>
    <property type="molecule type" value="Genomic_DNA"/>
</dbReference>
<dbReference type="SMR" id="A8GKI2"/>
<dbReference type="STRING" id="399741.Spro_4529"/>
<dbReference type="KEGG" id="spe:Spro_4529"/>
<dbReference type="eggNOG" id="COG0097">
    <property type="taxonomic scope" value="Bacteria"/>
</dbReference>
<dbReference type="HOGENOM" id="CLU_065464_1_2_6"/>
<dbReference type="OrthoDB" id="9805007at2"/>
<dbReference type="GO" id="GO:0022625">
    <property type="term" value="C:cytosolic large ribosomal subunit"/>
    <property type="evidence" value="ECO:0007669"/>
    <property type="project" value="TreeGrafter"/>
</dbReference>
<dbReference type="GO" id="GO:0019843">
    <property type="term" value="F:rRNA binding"/>
    <property type="evidence" value="ECO:0007669"/>
    <property type="project" value="UniProtKB-UniRule"/>
</dbReference>
<dbReference type="GO" id="GO:0003735">
    <property type="term" value="F:structural constituent of ribosome"/>
    <property type="evidence" value="ECO:0007669"/>
    <property type="project" value="InterPro"/>
</dbReference>
<dbReference type="GO" id="GO:0002181">
    <property type="term" value="P:cytoplasmic translation"/>
    <property type="evidence" value="ECO:0007669"/>
    <property type="project" value="TreeGrafter"/>
</dbReference>
<dbReference type="FunFam" id="3.90.930.12:FF:000001">
    <property type="entry name" value="50S ribosomal protein L6"/>
    <property type="match status" value="1"/>
</dbReference>
<dbReference type="FunFam" id="3.90.930.12:FF:000002">
    <property type="entry name" value="50S ribosomal protein L6"/>
    <property type="match status" value="1"/>
</dbReference>
<dbReference type="Gene3D" id="3.90.930.12">
    <property type="entry name" value="Ribosomal protein L6, alpha-beta domain"/>
    <property type="match status" value="2"/>
</dbReference>
<dbReference type="HAMAP" id="MF_01365_B">
    <property type="entry name" value="Ribosomal_uL6_B"/>
    <property type="match status" value="1"/>
</dbReference>
<dbReference type="InterPro" id="IPR000702">
    <property type="entry name" value="Ribosomal_uL6-like"/>
</dbReference>
<dbReference type="InterPro" id="IPR036789">
    <property type="entry name" value="Ribosomal_uL6-like_a/b-dom_sf"/>
</dbReference>
<dbReference type="InterPro" id="IPR020040">
    <property type="entry name" value="Ribosomal_uL6_a/b-dom"/>
</dbReference>
<dbReference type="InterPro" id="IPR019906">
    <property type="entry name" value="Ribosomal_uL6_bac-type"/>
</dbReference>
<dbReference type="InterPro" id="IPR002358">
    <property type="entry name" value="Ribosomal_uL6_CS"/>
</dbReference>
<dbReference type="NCBIfam" id="TIGR03654">
    <property type="entry name" value="L6_bact"/>
    <property type="match status" value="1"/>
</dbReference>
<dbReference type="PANTHER" id="PTHR11655">
    <property type="entry name" value="60S/50S RIBOSOMAL PROTEIN L6/L9"/>
    <property type="match status" value="1"/>
</dbReference>
<dbReference type="PANTHER" id="PTHR11655:SF14">
    <property type="entry name" value="LARGE RIBOSOMAL SUBUNIT PROTEIN UL6M"/>
    <property type="match status" value="1"/>
</dbReference>
<dbReference type="Pfam" id="PF00347">
    <property type="entry name" value="Ribosomal_L6"/>
    <property type="match status" value="2"/>
</dbReference>
<dbReference type="PIRSF" id="PIRSF002162">
    <property type="entry name" value="Ribosomal_L6"/>
    <property type="match status" value="1"/>
</dbReference>
<dbReference type="PRINTS" id="PR00059">
    <property type="entry name" value="RIBOSOMALL6"/>
</dbReference>
<dbReference type="SUPFAM" id="SSF56053">
    <property type="entry name" value="Ribosomal protein L6"/>
    <property type="match status" value="2"/>
</dbReference>
<dbReference type="PROSITE" id="PS00525">
    <property type="entry name" value="RIBOSOMAL_L6_1"/>
    <property type="match status" value="1"/>
</dbReference>
<feature type="chain" id="PRO_1000067982" description="Large ribosomal subunit protein uL6">
    <location>
        <begin position="1"/>
        <end position="177"/>
    </location>
</feature>